<sequence length="211" mass="22618">MTFAIPDDLAPEVYPLAWLLGRWRGPGFLAYPDIPERPVVVETEFTHDGGPYLAYASTTWLLDGELAGLDRPFDPEALAAGQLWAAESGYWRPVVGGPRRSAFGVVQEGSDTRTEPGGAEPDPAGRRAPSTEVEVLLAEPSGHVSVFVGSVRGPRIDLATDLVARTSTAAEVTAATRMYGLVQGDLMWATDLAAFGHEMQSYSSGRLARMA</sequence>
<dbReference type="EMBL" id="CP001618">
    <property type="protein sequence ID" value="ACQ81658.1"/>
    <property type="molecule type" value="Genomic_DNA"/>
</dbReference>
<dbReference type="RefSeq" id="WP_015883895.1">
    <property type="nucleotide sequence ID" value="NC_012669.1"/>
</dbReference>
<dbReference type="SMR" id="C5C233"/>
<dbReference type="STRING" id="471853.Bcav_3416"/>
<dbReference type="KEGG" id="bcv:Bcav_3416"/>
<dbReference type="eggNOG" id="COG3485">
    <property type="taxonomic scope" value="Bacteria"/>
</dbReference>
<dbReference type="HOGENOM" id="CLU_085483_0_1_11"/>
<dbReference type="OrthoDB" id="4804006at2"/>
<dbReference type="Proteomes" id="UP000007962">
    <property type="component" value="Chromosome"/>
</dbReference>
<dbReference type="CDD" id="cd07828">
    <property type="entry name" value="lipocalin_heme-bd-THAP4-like"/>
    <property type="match status" value="1"/>
</dbReference>
<dbReference type="Gene3D" id="2.40.128.20">
    <property type="match status" value="1"/>
</dbReference>
<dbReference type="HAMAP" id="MF_01297">
    <property type="entry name" value="nitrobindin"/>
    <property type="match status" value="1"/>
</dbReference>
<dbReference type="InterPro" id="IPR012674">
    <property type="entry name" value="Calycin"/>
</dbReference>
<dbReference type="InterPro" id="IPR022939">
    <property type="entry name" value="Nb(III)_bact/plant"/>
</dbReference>
<dbReference type="InterPro" id="IPR045165">
    <property type="entry name" value="Nitrobindin"/>
</dbReference>
<dbReference type="InterPro" id="IPR014878">
    <property type="entry name" value="THAP4-like_heme-bd"/>
</dbReference>
<dbReference type="PANTHER" id="PTHR15854:SF4">
    <property type="entry name" value="PEROXYNITRITE ISOMERASE THAP4"/>
    <property type="match status" value="1"/>
</dbReference>
<dbReference type="PANTHER" id="PTHR15854">
    <property type="entry name" value="THAP4 PROTEIN"/>
    <property type="match status" value="1"/>
</dbReference>
<dbReference type="Pfam" id="PF08768">
    <property type="entry name" value="THAP4_heme-bd"/>
    <property type="match status" value="1"/>
</dbReference>
<dbReference type="SUPFAM" id="SSF50814">
    <property type="entry name" value="Lipocalins"/>
    <property type="match status" value="1"/>
</dbReference>
<keyword id="KW-1185">Reference proteome</keyword>
<accession>C5C233</accession>
<protein>
    <recommendedName>
        <fullName evidence="3">Ferric nitrobindin-like protein</fullName>
    </recommendedName>
</protein>
<name>NBLIK_BEUC1</name>
<gene>
    <name type="ordered locus">Bcav_3416</name>
</gene>
<reference key="1">
    <citation type="journal article" date="2009" name="Stand. Genomic Sci.">
        <title>Complete genome sequence of Beutenbergia cavernae type strain (HKI 0122).</title>
        <authorList>
            <person name="Land M."/>
            <person name="Pukall R."/>
            <person name="Abt B."/>
            <person name="Goker M."/>
            <person name="Rohde M."/>
            <person name="Glavina Del Rio T."/>
            <person name="Tice H."/>
            <person name="Copeland A."/>
            <person name="Cheng J.F."/>
            <person name="Lucas S."/>
            <person name="Chen F."/>
            <person name="Nolan M."/>
            <person name="Bruce D."/>
            <person name="Goodwin L."/>
            <person name="Pitluck S."/>
            <person name="Ivanova N."/>
            <person name="Mavromatis K."/>
            <person name="Ovchinnikova G."/>
            <person name="Pati A."/>
            <person name="Chen A."/>
            <person name="Palaniappan K."/>
            <person name="Hauser L."/>
            <person name="Chang Y.J."/>
            <person name="Jefferies C.C."/>
            <person name="Saunders E."/>
            <person name="Brettin T."/>
            <person name="Detter J.C."/>
            <person name="Han C."/>
            <person name="Chain P."/>
            <person name="Bristow J."/>
            <person name="Eisen J.A."/>
            <person name="Markowitz V."/>
            <person name="Hugenholtz P."/>
            <person name="Kyrpides N.C."/>
            <person name="Klenk H.P."/>
            <person name="Lapidus A."/>
        </authorList>
    </citation>
    <scope>NUCLEOTIDE SEQUENCE [LARGE SCALE GENOMIC DNA]</scope>
    <source>
        <strain>ATCC BAA-8 / DSM 12333 / CCUG 43141 / JCM 11478 / NBRC 16432 / NCIMB 13614 / HKI 0122</strain>
    </source>
</reference>
<proteinExistence type="inferred from homology"/>
<evidence type="ECO:0000255" key="1">
    <source>
        <dbReference type="HAMAP-Rule" id="MF_01297"/>
    </source>
</evidence>
<evidence type="ECO:0000256" key="2">
    <source>
        <dbReference type="SAM" id="MobiDB-lite"/>
    </source>
</evidence>
<evidence type="ECO:0000305" key="3"/>
<feature type="chain" id="PRO_1000214223" description="Ferric nitrobindin-like protein">
    <location>
        <begin position="1"/>
        <end position="211"/>
    </location>
</feature>
<feature type="region of interest" description="Disordered" evidence="2">
    <location>
        <begin position="104"/>
        <end position="130"/>
    </location>
</feature>
<feature type="short sequence motif" description="GXWXGXG" evidence="1">
    <location>
        <begin position="21"/>
        <end position="27"/>
    </location>
</feature>
<comment type="similarity">
    <text evidence="1">Belongs to the nitrobindin family.</text>
</comment>
<comment type="caution">
    <text evidence="3">Lacks the conserved His residue that binds heme iron in the nitrobindin family.</text>
</comment>
<organism>
    <name type="scientific">Beutenbergia cavernae (strain ATCC BAA-8 / DSM 12333 / CCUG 43141 / JCM 11478 / NBRC 16432 / NCIMB 13614 / HKI 0122)</name>
    <dbReference type="NCBI Taxonomy" id="471853"/>
    <lineage>
        <taxon>Bacteria</taxon>
        <taxon>Bacillati</taxon>
        <taxon>Actinomycetota</taxon>
        <taxon>Actinomycetes</taxon>
        <taxon>Micrococcales</taxon>
        <taxon>Beutenbergiaceae</taxon>
        <taxon>Beutenbergia</taxon>
    </lineage>
</organism>